<reference key="1">
    <citation type="journal article" date="2002" name="Nature">
        <title>Genome sequence of the plant pathogen Ralstonia solanacearum.</title>
        <authorList>
            <person name="Salanoubat M."/>
            <person name="Genin S."/>
            <person name="Artiguenave F."/>
            <person name="Gouzy J."/>
            <person name="Mangenot S."/>
            <person name="Arlat M."/>
            <person name="Billault A."/>
            <person name="Brottier P."/>
            <person name="Camus J.-C."/>
            <person name="Cattolico L."/>
            <person name="Chandler M."/>
            <person name="Choisne N."/>
            <person name="Claudel-Renard C."/>
            <person name="Cunnac S."/>
            <person name="Demange N."/>
            <person name="Gaspin C."/>
            <person name="Lavie M."/>
            <person name="Moisan A."/>
            <person name="Robert C."/>
            <person name="Saurin W."/>
            <person name="Schiex T."/>
            <person name="Siguier P."/>
            <person name="Thebault P."/>
            <person name="Whalen M."/>
            <person name="Wincker P."/>
            <person name="Levy M."/>
            <person name="Weissenbach J."/>
            <person name="Boucher C.A."/>
        </authorList>
    </citation>
    <scope>NUCLEOTIDE SEQUENCE [LARGE SCALE GENOMIC DNA]</scope>
    <source>
        <strain>ATCC BAA-1114 / GMI1000</strain>
    </source>
</reference>
<protein>
    <recommendedName>
        <fullName evidence="1">Glycogen synthase</fullName>
        <ecNumber evidence="1">2.4.1.21</ecNumber>
    </recommendedName>
    <alternativeName>
        <fullName evidence="1">Starch [bacterial glycogen] synthase</fullName>
    </alternativeName>
</protein>
<proteinExistence type="inferred from homology"/>
<keyword id="KW-0320">Glycogen biosynthesis</keyword>
<keyword id="KW-0328">Glycosyltransferase</keyword>
<keyword id="KW-0614">Plasmid</keyword>
<keyword id="KW-1185">Reference proteome</keyword>
<keyword id="KW-0808">Transferase</keyword>
<geneLocation type="plasmid">
    <name>megaplasmid Rsp</name>
</geneLocation>
<evidence type="ECO:0000255" key="1">
    <source>
        <dbReference type="HAMAP-Rule" id="MF_00484"/>
    </source>
</evidence>
<evidence type="ECO:0000256" key="2">
    <source>
        <dbReference type="SAM" id="MobiDB-lite"/>
    </source>
</evidence>
<sequence length="541" mass="57983">MSLNVLFVASEAVPLAKTGGLGDMVGACAGALQRAGLHVTVMLPGYPAAQAQLRDARVACALPDLPGGPARVLLGAMPDTGVPVLLLDAPALFDRPGNPYLDACGEPYADNALRFAAFSHAAAHVAGGVPDLPAFDIVQAHDWHAALVPLLVKRAGRPVKTVLTVHNLAFQGNFPPRIAQDLGLPPEAVREAGFFGQFSFLKAGLMWADRITTVSRTYAREILTDAFGYGMQDVLRARRHDLVAILNGIDNAVWNPSKDAYLSRPFFAGNLSGKHAAKLQLQTLLRLPKDAHAPLLALGSRLTHQKMADVALQALPQMLEAHPDLQVAVLGCGERRYESAMAALAERHPRRMAAVIGYTERNAHMLHAGADLLLHGSRFEPCGLTPLYAMRYGTVPVASRVGGLVDTIADRGSPEAALRGATGFLFDGETPEAMAGAVARALRVFVQPRAWRVLQYNGMTTDFGWSQPASEYLALYATLAPRATPMPHLQHWPMRTLARPASPPDTAPVGKPARRRRTTALSTTARAHPVARAAGREKIRA</sequence>
<accession>Q8XT73</accession>
<dbReference type="EC" id="2.4.1.21" evidence="1"/>
<dbReference type="EMBL" id="AL646053">
    <property type="protein sequence ID" value="CAD17393.1"/>
    <property type="molecule type" value="Genomic_DNA"/>
</dbReference>
<dbReference type="RefSeq" id="WP_011003556.1">
    <property type="nucleotide sequence ID" value="NC_003296.1"/>
</dbReference>
<dbReference type="SMR" id="Q8XT73"/>
<dbReference type="STRING" id="267608.RSp0242"/>
<dbReference type="CAZy" id="GT5">
    <property type="family name" value="Glycosyltransferase Family 5"/>
</dbReference>
<dbReference type="EnsemblBacteria" id="CAD17393">
    <property type="protein sequence ID" value="CAD17393"/>
    <property type="gene ID" value="RSp0242"/>
</dbReference>
<dbReference type="KEGG" id="rso:RSp0242"/>
<dbReference type="PATRIC" id="fig|267608.8.peg.3711"/>
<dbReference type="eggNOG" id="COG0297">
    <property type="taxonomic scope" value="Bacteria"/>
</dbReference>
<dbReference type="HOGENOM" id="CLU_009583_18_4_4"/>
<dbReference type="UniPathway" id="UPA00164"/>
<dbReference type="Proteomes" id="UP000001436">
    <property type="component" value="Plasmid megaplasmid Rsp"/>
</dbReference>
<dbReference type="GO" id="GO:0009011">
    <property type="term" value="F:alpha-1,4-glucan glucosyltransferase (ADP-glucose donor) activity"/>
    <property type="evidence" value="ECO:0007669"/>
    <property type="project" value="UniProtKB-UniRule"/>
</dbReference>
<dbReference type="GO" id="GO:0004373">
    <property type="term" value="F:alpha-1,4-glucan glucosyltransferase (UDP-glucose donor) activity"/>
    <property type="evidence" value="ECO:0007669"/>
    <property type="project" value="InterPro"/>
</dbReference>
<dbReference type="GO" id="GO:0005978">
    <property type="term" value="P:glycogen biosynthetic process"/>
    <property type="evidence" value="ECO:0007669"/>
    <property type="project" value="UniProtKB-UniRule"/>
</dbReference>
<dbReference type="CDD" id="cd03791">
    <property type="entry name" value="GT5_Glycogen_synthase_DULL1-like"/>
    <property type="match status" value="1"/>
</dbReference>
<dbReference type="Gene3D" id="3.40.50.2000">
    <property type="entry name" value="Glycogen Phosphorylase B"/>
    <property type="match status" value="2"/>
</dbReference>
<dbReference type="HAMAP" id="MF_00484">
    <property type="entry name" value="Glycogen_synth"/>
    <property type="match status" value="1"/>
</dbReference>
<dbReference type="InterPro" id="IPR001296">
    <property type="entry name" value="Glyco_trans_1"/>
</dbReference>
<dbReference type="InterPro" id="IPR011835">
    <property type="entry name" value="GS/SS"/>
</dbReference>
<dbReference type="InterPro" id="IPR013534">
    <property type="entry name" value="Starch_synth_cat_dom"/>
</dbReference>
<dbReference type="NCBIfam" id="TIGR02095">
    <property type="entry name" value="glgA"/>
    <property type="match status" value="1"/>
</dbReference>
<dbReference type="NCBIfam" id="NF001899">
    <property type="entry name" value="PRK00654.1-2"/>
    <property type="match status" value="1"/>
</dbReference>
<dbReference type="PANTHER" id="PTHR45825:SF11">
    <property type="entry name" value="ALPHA AMYLASE DOMAIN-CONTAINING PROTEIN"/>
    <property type="match status" value="1"/>
</dbReference>
<dbReference type="PANTHER" id="PTHR45825">
    <property type="entry name" value="GRANULE-BOUND STARCH SYNTHASE 1, CHLOROPLASTIC/AMYLOPLASTIC"/>
    <property type="match status" value="1"/>
</dbReference>
<dbReference type="Pfam" id="PF08323">
    <property type="entry name" value="Glyco_transf_5"/>
    <property type="match status" value="1"/>
</dbReference>
<dbReference type="Pfam" id="PF00534">
    <property type="entry name" value="Glycos_transf_1"/>
    <property type="match status" value="1"/>
</dbReference>
<dbReference type="SUPFAM" id="SSF53756">
    <property type="entry name" value="UDP-Glycosyltransferase/glycogen phosphorylase"/>
    <property type="match status" value="1"/>
</dbReference>
<gene>
    <name evidence="1" type="primary">glgA</name>
    <name type="ordered locus">RSp0242</name>
    <name type="ORF">RS03725</name>
</gene>
<feature type="chain" id="PRO_0000188635" description="Glycogen synthase">
    <location>
        <begin position="1"/>
        <end position="541"/>
    </location>
</feature>
<feature type="region of interest" description="Disordered" evidence="2">
    <location>
        <begin position="497"/>
        <end position="541"/>
    </location>
</feature>
<feature type="binding site" evidence="1">
    <location>
        <position position="17"/>
    </location>
    <ligand>
        <name>ADP-alpha-D-glucose</name>
        <dbReference type="ChEBI" id="CHEBI:57498"/>
    </ligand>
</feature>
<name>GLGA_RALN1</name>
<organism>
    <name type="scientific">Ralstonia nicotianae (strain ATCC BAA-1114 / GMI1000)</name>
    <name type="common">Ralstonia solanacearum</name>
    <dbReference type="NCBI Taxonomy" id="267608"/>
    <lineage>
        <taxon>Bacteria</taxon>
        <taxon>Pseudomonadati</taxon>
        <taxon>Pseudomonadota</taxon>
        <taxon>Betaproteobacteria</taxon>
        <taxon>Burkholderiales</taxon>
        <taxon>Burkholderiaceae</taxon>
        <taxon>Ralstonia</taxon>
        <taxon>Ralstonia solanacearum species complex</taxon>
    </lineage>
</organism>
<comment type="function">
    <text evidence="1">Synthesizes alpha-1,4-glucan chains using ADP-glucose.</text>
</comment>
<comment type="catalytic activity">
    <reaction evidence="1">
        <text>[(1-&gt;4)-alpha-D-glucosyl](n) + ADP-alpha-D-glucose = [(1-&gt;4)-alpha-D-glucosyl](n+1) + ADP + H(+)</text>
        <dbReference type="Rhea" id="RHEA:18189"/>
        <dbReference type="Rhea" id="RHEA-COMP:9584"/>
        <dbReference type="Rhea" id="RHEA-COMP:9587"/>
        <dbReference type="ChEBI" id="CHEBI:15378"/>
        <dbReference type="ChEBI" id="CHEBI:15444"/>
        <dbReference type="ChEBI" id="CHEBI:57498"/>
        <dbReference type="ChEBI" id="CHEBI:456216"/>
        <dbReference type="EC" id="2.4.1.21"/>
    </reaction>
</comment>
<comment type="pathway">
    <text evidence="1">Glycan biosynthesis; glycogen biosynthesis.</text>
</comment>
<comment type="similarity">
    <text evidence="1">Belongs to the glycosyltransferase 1 family. Bacterial/plant glycogen synthase subfamily.</text>
</comment>